<accession>Q16B38</accession>
<protein>
    <recommendedName>
        <fullName evidence="1">Coenzyme PQQ synthesis protein A</fullName>
    </recommendedName>
    <alternativeName>
        <fullName evidence="1">Pyrroloquinoline quinone biosynthesis protein A</fullName>
    </alternativeName>
</protein>
<name>PQQA_ROSDO</name>
<comment type="function">
    <text evidence="1">Required for coenzyme pyrroloquinoline quinone (PQQ) biosynthesis. PQQ is probably formed by cross-linking a specific glutamate to a specific tyrosine residue and excising these residues from the peptide.</text>
</comment>
<comment type="pathway">
    <text evidence="1">Cofactor biosynthesis; pyrroloquinoline quinone biosynthesis.</text>
</comment>
<comment type="similarity">
    <text evidence="1">Belongs to the PqqA family.</text>
</comment>
<evidence type="ECO:0000255" key="1">
    <source>
        <dbReference type="HAMAP-Rule" id="MF_00656"/>
    </source>
</evidence>
<keyword id="KW-0884">PQQ biosynthesis</keyword>
<keyword id="KW-1185">Reference proteome</keyword>
<sequence length="35" mass="4241">MAWTKPIIREIECGMEINMYGPENEDRHDDRDDLF</sequence>
<reference key="1">
    <citation type="journal article" date="2007" name="J. Bacteriol.">
        <title>The complete genome sequence of Roseobacter denitrificans reveals a mixotrophic rather than photosynthetic metabolism.</title>
        <authorList>
            <person name="Swingley W.D."/>
            <person name="Sadekar S."/>
            <person name="Mastrian S.D."/>
            <person name="Matthies H.J."/>
            <person name="Hao J."/>
            <person name="Ramos H."/>
            <person name="Acharya C.R."/>
            <person name="Conrad A.L."/>
            <person name="Taylor H.L."/>
            <person name="Dejesa L.C."/>
            <person name="Shah M.K."/>
            <person name="O'Huallachain M.E."/>
            <person name="Lince M.T."/>
            <person name="Blankenship R.E."/>
            <person name="Beatty J.T."/>
            <person name="Touchman J.W."/>
        </authorList>
    </citation>
    <scope>NUCLEOTIDE SEQUENCE [LARGE SCALE GENOMIC DNA]</scope>
    <source>
        <strain>ATCC 33942 / OCh 114</strain>
    </source>
</reference>
<gene>
    <name evidence="1" type="primary">pqqA</name>
    <name type="ordered locus">RD1_1154</name>
</gene>
<proteinExistence type="inferred from homology"/>
<dbReference type="EMBL" id="CP000362">
    <property type="protein sequence ID" value="ABG30805.1"/>
    <property type="molecule type" value="Genomic_DNA"/>
</dbReference>
<dbReference type="RefSeq" id="WP_011567425.1">
    <property type="nucleotide sequence ID" value="NC_008209.1"/>
</dbReference>
<dbReference type="STRING" id="375451.RD1_1154"/>
<dbReference type="KEGG" id="rde:RD1_1154"/>
<dbReference type="eggNOG" id="ENOG5031AFM">
    <property type="taxonomic scope" value="Bacteria"/>
</dbReference>
<dbReference type="HOGENOM" id="CLU_219399_1_0_5"/>
<dbReference type="OrthoDB" id="8163745at2"/>
<dbReference type="UniPathway" id="UPA00539"/>
<dbReference type="Proteomes" id="UP000007029">
    <property type="component" value="Chromosome"/>
</dbReference>
<dbReference type="GO" id="GO:0018189">
    <property type="term" value="P:pyrroloquinoline quinone biosynthetic process"/>
    <property type="evidence" value="ECO:0007669"/>
    <property type="project" value="UniProtKB-UniRule"/>
</dbReference>
<dbReference type="HAMAP" id="MF_00656">
    <property type="entry name" value="PQQ_syn_PqqA"/>
    <property type="match status" value="1"/>
</dbReference>
<dbReference type="InterPro" id="IPR011725">
    <property type="entry name" value="PQQ_synth_PqqA"/>
</dbReference>
<dbReference type="NCBIfam" id="TIGR02107">
    <property type="entry name" value="PQQ_syn_pqqA"/>
    <property type="match status" value="1"/>
</dbReference>
<dbReference type="Pfam" id="PF08042">
    <property type="entry name" value="PqqA"/>
    <property type="match status" value="1"/>
</dbReference>
<organism>
    <name type="scientific">Roseobacter denitrificans (strain ATCC 33942 / OCh 114)</name>
    <name type="common">Erythrobacter sp. (strain OCh 114)</name>
    <name type="synonym">Roseobacter denitrificans</name>
    <dbReference type="NCBI Taxonomy" id="375451"/>
    <lineage>
        <taxon>Bacteria</taxon>
        <taxon>Pseudomonadati</taxon>
        <taxon>Pseudomonadota</taxon>
        <taxon>Alphaproteobacteria</taxon>
        <taxon>Rhodobacterales</taxon>
        <taxon>Roseobacteraceae</taxon>
        <taxon>Roseobacter</taxon>
    </lineage>
</organism>
<feature type="chain" id="PRO_1000061705" description="Coenzyme PQQ synthesis protein A">
    <location>
        <begin position="1"/>
        <end position="35"/>
    </location>
</feature>
<feature type="cross-link" description="Pyrroloquinoline quinone (Glu-Tyr)" evidence="1">
    <location>
        <begin position="16"/>
        <end position="20"/>
    </location>
</feature>